<accession>Q5L3Q9</accession>
<proteinExistence type="inferred from homology"/>
<evidence type="ECO:0000255" key="1">
    <source>
        <dbReference type="HAMAP-Rule" id="MF_01710"/>
    </source>
</evidence>
<reference key="1">
    <citation type="journal article" date="2004" name="Nucleic Acids Res.">
        <title>Thermoadaptation trait revealed by the genome sequence of thermophilic Geobacillus kaustophilus.</title>
        <authorList>
            <person name="Takami H."/>
            <person name="Takaki Y."/>
            <person name="Chee G.-J."/>
            <person name="Nishi S."/>
            <person name="Shimamura S."/>
            <person name="Suzuki H."/>
            <person name="Matsui S."/>
            <person name="Uchiyama I."/>
        </authorList>
    </citation>
    <scope>NUCLEOTIDE SEQUENCE [LARGE SCALE GENOMIC DNA]</scope>
    <source>
        <strain>HTA426</strain>
    </source>
</reference>
<keyword id="KW-0067">ATP-binding</keyword>
<keyword id="KW-1003">Cell membrane</keyword>
<keyword id="KW-0472">Membrane</keyword>
<keyword id="KW-0547">Nucleotide-binding</keyword>
<keyword id="KW-1185">Reference proteome</keyword>
<keyword id="KW-1278">Translocase</keyword>
<keyword id="KW-0813">Transport</keyword>
<name>ECFA2_GEOKA</name>
<sequence length="290" mass="32255">MDIVFEKVEHVYNARSPLARRALYDVNVAIRSGAYVAVVGHTGSGKSTLLQHLNGLLQPTSGAVKIGEETITSHKRPKQLKPLRKKVGVVFQFPEHQLFEETVEKDICFGPLNFGVPEDEAKRKARELIKLVGLSEDVLAKSPFDLSGGQMRRVAIAGVLALEPEVLVLDEPTAGLDPRGRKEMMEMFYRLHREKQLTTVLVTHSMEDAARYADEIIVMHEGTVWGHGTPEEMFRDADKLAAIGLSVPETVKLKQQLEKRFGVVIPSPCLTLEQTAEAIQQLFSKVSVHD</sequence>
<protein>
    <recommendedName>
        <fullName evidence="1">Energy-coupling factor transporter ATP-binding protein EcfA2</fullName>
        <shortName evidence="1">ECF transporter A component EcfA2</shortName>
        <ecNumber evidence="1">7.-.-.-</ecNumber>
    </recommendedName>
</protein>
<feature type="chain" id="PRO_0000287940" description="Energy-coupling factor transporter ATP-binding protein EcfA2">
    <location>
        <begin position="1"/>
        <end position="290"/>
    </location>
</feature>
<feature type="domain" description="ABC transporter" evidence="1">
    <location>
        <begin position="6"/>
        <end position="246"/>
    </location>
</feature>
<feature type="binding site" evidence="1">
    <location>
        <begin position="40"/>
        <end position="47"/>
    </location>
    <ligand>
        <name>ATP</name>
        <dbReference type="ChEBI" id="CHEBI:30616"/>
    </ligand>
</feature>
<dbReference type="EC" id="7.-.-.-" evidence="1"/>
<dbReference type="EMBL" id="BA000043">
    <property type="protein sequence ID" value="BAD74421.1"/>
    <property type="molecule type" value="Genomic_DNA"/>
</dbReference>
<dbReference type="RefSeq" id="WP_011229648.1">
    <property type="nucleotide sequence ID" value="NC_006510.1"/>
</dbReference>
<dbReference type="SMR" id="Q5L3Q9"/>
<dbReference type="STRING" id="235909.GK0136"/>
<dbReference type="KEGG" id="gka:GK0136"/>
<dbReference type="eggNOG" id="COG1122">
    <property type="taxonomic scope" value="Bacteria"/>
</dbReference>
<dbReference type="HOGENOM" id="CLU_000604_1_22_9"/>
<dbReference type="Proteomes" id="UP000001172">
    <property type="component" value="Chromosome"/>
</dbReference>
<dbReference type="GO" id="GO:0043190">
    <property type="term" value="C:ATP-binding cassette (ABC) transporter complex"/>
    <property type="evidence" value="ECO:0007669"/>
    <property type="project" value="TreeGrafter"/>
</dbReference>
<dbReference type="GO" id="GO:0005524">
    <property type="term" value="F:ATP binding"/>
    <property type="evidence" value="ECO:0007669"/>
    <property type="project" value="UniProtKB-KW"/>
</dbReference>
<dbReference type="GO" id="GO:0016887">
    <property type="term" value="F:ATP hydrolysis activity"/>
    <property type="evidence" value="ECO:0007669"/>
    <property type="project" value="InterPro"/>
</dbReference>
<dbReference type="GO" id="GO:0042626">
    <property type="term" value="F:ATPase-coupled transmembrane transporter activity"/>
    <property type="evidence" value="ECO:0007669"/>
    <property type="project" value="TreeGrafter"/>
</dbReference>
<dbReference type="CDD" id="cd03225">
    <property type="entry name" value="ABC_cobalt_CbiO_domain1"/>
    <property type="match status" value="1"/>
</dbReference>
<dbReference type="FunFam" id="3.40.50.300:FF:000224">
    <property type="entry name" value="Energy-coupling factor transporter ATP-binding protein EcfA"/>
    <property type="match status" value="1"/>
</dbReference>
<dbReference type="Gene3D" id="3.40.50.300">
    <property type="entry name" value="P-loop containing nucleotide triphosphate hydrolases"/>
    <property type="match status" value="1"/>
</dbReference>
<dbReference type="InterPro" id="IPR003593">
    <property type="entry name" value="AAA+_ATPase"/>
</dbReference>
<dbReference type="InterPro" id="IPR003439">
    <property type="entry name" value="ABC_transporter-like_ATP-bd"/>
</dbReference>
<dbReference type="InterPro" id="IPR017871">
    <property type="entry name" value="ABC_transporter-like_CS"/>
</dbReference>
<dbReference type="InterPro" id="IPR015856">
    <property type="entry name" value="ABC_transpr_CbiO/EcfA_su"/>
</dbReference>
<dbReference type="InterPro" id="IPR050095">
    <property type="entry name" value="ECF_ABC_transporter_ATP-bd"/>
</dbReference>
<dbReference type="InterPro" id="IPR030946">
    <property type="entry name" value="EcfA2"/>
</dbReference>
<dbReference type="InterPro" id="IPR027417">
    <property type="entry name" value="P-loop_NTPase"/>
</dbReference>
<dbReference type="NCBIfam" id="TIGR04521">
    <property type="entry name" value="ECF_ATPase_2"/>
    <property type="match status" value="1"/>
</dbReference>
<dbReference type="NCBIfam" id="NF010155">
    <property type="entry name" value="PRK13634.1"/>
    <property type="match status" value="1"/>
</dbReference>
<dbReference type="PANTHER" id="PTHR43553:SF27">
    <property type="entry name" value="ENERGY-COUPLING FACTOR TRANSPORTER ATP-BINDING PROTEIN ECFA2"/>
    <property type="match status" value="1"/>
</dbReference>
<dbReference type="PANTHER" id="PTHR43553">
    <property type="entry name" value="HEAVY METAL TRANSPORTER"/>
    <property type="match status" value="1"/>
</dbReference>
<dbReference type="Pfam" id="PF00005">
    <property type="entry name" value="ABC_tran"/>
    <property type="match status" value="1"/>
</dbReference>
<dbReference type="SMART" id="SM00382">
    <property type="entry name" value="AAA"/>
    <property type="match status" value="1"/>
</dbReference>
<dbReference type="SUPFAM" id="SSF52540">
    <property type="entry name" value="P-loop containing nucleoside triphosphate hydrolases"/>
    <property type="match status" value="1"/>
</dbReference>
<dbReference type="PROSITE" id="PS00211">
    <property type="entry name" value="ABC_TRANSPORTER_1"/>
    <property type="match status" value="1"/>
</dbReference>
<dbReference type="PROSITE" id="PS50893">
    <property type="entry name" value="ABC_TRANSPORTER_2"/>
    <property type="match status" value="1"/>
</dbReference>
<dbReference type="PROSITE" id="PS51246">
    <property type="entry name" value="CBIO"/>
    <property type="match status" value="1"/>
</dbReference>
<gene>
    <name evidence="1" type="primary">ecfA2</name>
    <name type="synonym">cbiO2</name>
    <name type="ordered locus">GK0136</name>
</gene>
<organism>
    <name type="scientific">Geobacillus kaustophilus (strain HTA426)</name>
    <dbReference type="NCBI Taxonomy" id="235909"/>
    <lineage>
        <taxon>Bacteria</taxon>
        <taxon>Bacillati</taxon>
        <taxon>Bacillota</taxon>
        <taxon>Bacilli</taxon>
        <taxon>Bacillales</taxon>
        <taxon>Anoxybacillaceae</taxon>
        <taxon>Geobacillus</taxon>
        <taxon>Geobacillus thermoleovorans group</taxon>
    </lineage>
</organism>
<comment type="function">
    <text evidence="1">ATP-binding (A) component of a common energy-coupling factor (ECF) ABC-transporter complex. Unlike classic ABC transporters this ECF transporter provides the energy necessary to transport a number of different substrates.</text>
</comment>
<comment type="subunit">
    <text evidence="1">Forms a stable energy-coupling factor (ECF) transporter complex composed of 2 membrane-embedded substrate-binding proteins (S component), 2 ATP-binding proteins (A component) and 2 transmembrane proteins (T component).</text>
</comment>
<comment type="subcellular location">
    <subcellularLocation>
        <location evidence="1">Cell membrane</location>
        <topology evidence="1">Peripheral membrane protein</topology>
    </subcellularLocation>
</comment>
<comment type="similarity">
    <text evidence="1">Belongs to the ABC transporter superfamily. Energy-coupling factor EcfA family.</text>
</comment>